<comment type="function">
    <text evidence="1 2 6 8 9 11 12 14 16 17">Sodium-activated K(+) channel (PubMed:12628167, PubMed:14684870, PubMed:16687497, PubMed:24463883, PubMed:36898835). Acts as an important mediator of neuronal membrane excitability (By similarity). Contributes to the delayed outward currents (PubMed:10196543, PubMed:19412167). Regulates neuronal bursting in sensory neurons (PubMed:16687497, PubMed:18787033). Contributes to synaptic development and plasticity (By similarity).</text>
</comment>
<comment type="catalytic activity">
    <reaction evidence="8 9">
        <text>K(+)(in) = K(+)(out)</text>
        <dbReference type="Rhea" id="RHEA:29463"/>
        <dbReference type="ChEBI" id="CHEBI:29103"/>
    </reaction>
</comment>
<comment type="activity regulation">
    <text evidence="8 9 11 17">Activated by high intracellular Na(+) level (PubMed:12628167, PubMed:14684870, PubMed:36898835). In addition to activation by Na(+), is cooperatively activated by intracellular Cl(-) levels (PubMed:12628167, PubMed:36898835). Activated upon stimulation of G-protein coupled receptors, such as CHRM1 and GRIA1 (PubMed:16687497).</text>
</comment>
<comment type="subunit">
    <text evidence="1 10 13">Homotetramer; which constitutes the Na(+)-activated K(+) channel (By similarity). Interacts with KCNT2; these heterodimer channels differ from the homomers in their unitary conductance, kinetic behavior, subcellular localization, and response to activation of protein kinase C (PubMed:19403831). Interacts (via C-terminus) with FMR1; this interaction alters gating properties of KCNT1 (By similarity). Interacts with CRBN via its cytoplasmic C-terminus (PubMed:16045448).</text>
</comment>
<comment type="subunit">
    <molecule>Isoform 2</molecule>
    <text evidence="13">Does not interact with KCNT2.</text>
</comment>
<comment type="subcellular location">
    <subcellularLocation>
        <location evidence="7 10 17">Cell membrane</location>
        <topology evidence="1">Multi-pass membrane protein</topology>
    </subcellularLocation>
</comment>
<comment type="alternative products">
    <event type="alternative splicing"/>
    <isoform>
        <id>Q9Z258-1</id>
        <name>1</name>
        <name evidence="19">SLACK-B</name>
        <sequence type="displayed"/>
    </isoform>
    <isoform>
        <id>Q9Z258-2</id>
        <name>2</name>
        <name evidence="20">SLACK-A</name>
        <sequence type="described" ref="VSP_015472"/>
    </isoform>
</comment>
<comment type="tissue specificity">
    <text evidence="6 7 11">Detected in brain and brainstem, in vestibular and oculomotor nuclei, the medial nucleus of the trapezoid in the auditory system, in olfactory bulb, red nucleus, and deep cerebellar nuclei. Detected in thalamus, substantia nigra, and amygdala (at protein level). Highly expressed in the brain and kidney.</text>
</comment>
<comment type="domain">
    <text evidence="13">The cytoplasmic N-terminal domain facilitates the localization of heteromeric KCNT1/KCNT2 channels to the plasma membrane.</text>
</comment>
<comment type="domain">
    <text evidence="1">The cytoplasmic gating ring domain of the closed KCNT1 channel harbors multiple K(+) and Zn(2+) sites, which stabilize the channel in the closed conformation. Under low-Na(+) conditions, the abundant cytoplasmic K(+) ions stabilize the gating ring domain in a closed conformation. The open KCNT1 structure contains at least two Na(+)-sensitive sites in the RCKs domain where Na(+) binding induces expansion and rotation of the gating ring that opens the inner gate.</text>
</comment>
<comment type="PTM">
    <text evidence="11">Phosphorylated by protein kinase C. Phosphorylation of the C-terminal domain increases channel activity.</text>
</comment>
<comment type="similarity">
    <text evidence="21">Belongs to the potassium channel family. Calcium-activated (TC 1.A.1.3) subfamily. KCa4.1/KCNT1 sub-subfamily.</text>
</comment>
<evidence type="ECO:0000250" key="1">
    <source>
        <dbReference type="UniProtKB" id="Q5JUK3"/>
    </source>
</evidence>
<evidence type="ECO:0000250" key="2">
    <source>
        <dbReference type="UniProtKB" id="Q6ZPR4"/>
    </source>
</evidence>
<evidence type="ECO:0000255" key="3"/>
<evidence type="ECO:0000255" key="4">
    <source>
        <dbReference type="PROSITE-ProRule" id="PRU00543"/>
    </source>
</evidence>
<evidence type="ECO:0000256" key="5">
    <source>
        <dbReference type="SAM" id="MobiDB-lite"/>
    </source>
</evidence>
<evidence type="ECO:0000269" key="6">
    <source>
    </source>
</evidence>
<evidence type="ECO:0000269" key="7">
    <source>
    </source>
</evidence>
<evidence type="ECO:0000269" key="8">
    <source>
    </source>
</evidence>
<evidence type="ECO:0000269" key="9">
    <source>
    </source>
</evidence>
<evidence type="ECO:0000269" key="10">
    <source>
    </source>
</evidence>
<evidence type="ECO:0000269" key="11">
    <source>
    </source>
</evidence>
<evidence type="ECO:0000269" key="12">
    <source>
    </source>
</evidence>
<evidence type="ECO:0000269" key="13">
    <source>
    </source>
</evidence>
<evidence type="ECO:0000269" key="14">
    <source>
    </source>
</evidence>
<evidence type="ECO:0000269" key="15">
    <source>
    </source>
</evidence>
<evidence type="ECO:0000269" key="16">
    <source>
    </source>
</evidence>
<evidence type="ECO:0000269" key="17">
    <source>
    </source>
</evidence>
<evidence type="ECO:0000303" key="18">
    <source>
    </source>
</evidence>
<evidence type="ECO:0000303" key="19">
    <source>
    </source>
</evidence>
<evidence type="ECO:0000303" key="20">
    <source ref="2"/>
</evidence>
<evidence type="ECO:0000305" key="21"/>
<reference key="1">
    <citation type="journal article" date="1998" name="Nat. Neurosci.">
        <title>Formation of intermediate-conductance calcium-activated potassium channels by interaction of Slack and Slo subunits.</title>
        <authorList>
            <person name="Joiner W.J."/>
            <person name="Tang M.D."/>
            <person name="Wang L.-Y."/>
            <person name="Dworetzky S.I."/>
            <person name="Boissard C.G."/>
            <person name="Gan L."/>
            <person name="Gribkoff V.K."/>
            <person name="Kaczmarek L.K."/>
        </authorList>
    </citation>
    <scope>NUCLEOTIDE SEQUENCE [MRNA] (ISOFORM 1)</scope>
    <scope>FUNCTION</scope>
    <scope>TISSUE SPECIFICITY</scope>
    <source>
        <tissue>Brain</tissue>
    </source>
</reference>
<reference key="2">
    <citation type="submission" date="2005-01" db="EMBL/GenBank/DDBJ databases">
        <title>An alternative isoform of the sodium-activated potassium channel Slack exhibits fast gating kinetics.</title>
        <authorList>
            <person name="Bhattacharjee A."/>
            <person name="von Hehn C.A."/>
            <person name="Kaczmarek L.K."/>
        </authorList>
    </citation>
    <scope>NUCLEOTIDE SEQUENCE [MRNA] (ISOFORM 2)</scope>
    <source>
        <strain>Sprague-Dawley</strain>
    </source>
</reference>
<reference key="3">
    <citation type="journal article" date="2002" name="J. Comp. Neurol.">
        <title>Localization of the Slack potassium channel in the rat central nervous system.</title>
        <authorList>
            <person name="Bhattacharjee A."/>
            <person name="Gan L."/>
            <person name="Kaczmarek L.K."/>
        </authorList>
    </citation>
    <scope>SUBCELLULAR LOCATION</scope>
    <scope>TISSUE SPECIFICITY</scope>
</reference>
<reference key="4">
    <citation type="journal article" date="2004" name="Nature">
        <title>Genome sequence of the Brown Norway rat yields insights into mammalian evolution.</title>
        <authorList>
            <person name="Gibbs R.A."/>
            <person name="Weinstock G.M."/>
            <person name="Metzker M.L."/>
            <person name="Muzny D.M."/>
            <person name="Sodergren E.J."/>
            <person name="Scherer S."/>
            <person name="Scott G."/>
            <person name="Steffen D."/>
            <person name="Worley K.C."/>
            <person name="Burch P.E."/>
            <person name="Okwuonu G."/>
            <person name="Hines S."/>
            <person name="Lewis L."/>
            <person name="Deramo C."/>
            <person name="Delgado O."/>
            <person name="Dugan-Rocha S."/>
            <person name="Miner G."/>
            <person name="Morgan M."/>
            <person name="Hawes A."/>
            <person name="Gill R."/>
            <person name="Holt R.A."/>
            <person name="Adams M.D."/>
            <person name="Amanatides P.G."/>
            <person name="Baden-Tillson H."/>
            <person name="Barnstead M."/>
            <person name="Chin S."/>
            <person name="Evans C.A."/>
            <person name="Ferriera S."/>
            <person name="Fosler C."/>
            <person name="Glodek A."/>
            <person name="Gu Z."/>
            <person name="Jennings D."/>
            <person name="Kraft C.L."/>
            <person name="Nguyen T."/>
            <person name="Pfannkoch C.M."/>
            <person name="Sitter C."/>
            <person name="Sutton G.G."/>
            <person name="Venter J.C."/>
            <person name="Woodage T."/>
            <person name="Smith D."/>
            <person name="Lee H.-M."/>
            <person name="Gustafson E."/>
            <person name="Cahill P."/>
            <person name="Kana A."/>
            <person name="Doucette-Stamm L."/>
            <person name="Weinstock K."/>
            <person name="Fechtel K."/>
            <person name="Weiss R.B."/>
            <person name="Dunn D.M."/>
            <person name="Green E.D."/>
            <person name="Blakesley R.W."/>
            <person name="Bouffard G.G."/>
            <person name="De Jong P.J."/>
            <person name="Osoegawa K."/>
            <person name="Zhu B."/>
            <person name="Marra M."/>
            <person name="Schein J."/>
            <person name="Bosdet I."/>
            <person name="Fjell C."/>
            <person name="Jones S."/>
            <person name="Krzywinski M."/>
            <person name="Mathewson C."/>
            <person name="Siddiqui A."/>
            <person name="Wye N."/>
            <person name="McPherson J."/>
            <person name="Zhao S."/>
            <person name="Fraser C.M."/>
            <person name="Shetty J."/>
            <person name="Shatsman S."/>
            <person name="Geer K."/>
            <person name="Chen Y."/>
            <person name="Abramzon S."/>
            <person name="Nierman W.C."/>
            <person name="Havlak P.H."/>
            <person name="Chen R."/>
            <person name="Durbin K.J."/>
            <person name="Egan A."/>
            <person name="Ren Y."/>
            <person name="Song X.-Z."/>
            <person name="Li B."/>
            <person name="Liu Y."/>
            <person name="Qin X."/>
            <person name="Cawley S."/>
            <person name="Cooney A.J."/>
            <person name="D'Souza L.M."/>
            <person name="Martin K."/>
            <person name="Wu J.Q."/>
            <person name="Gonzalez-Garay M.L."/>
            <person name="Jackson A.R."/>
            <person name="Kalafus K.J."/>
            <person name="McLeod M.P."/>
            <person name="Milosavljevic A."/>
            <person name="Virk D."/>
            <person name="Volkov A."/>
            <person name="Wheeler D.A."/>
            <person name="Zhang Z."/>
            <person name="Bailey J.A."/>
            <person name="Eichler E.E."/>
            <person name="Tuzun E."/>
            <person name="Birney E."/>
            <person name="Mongin E."/>
            <person name="Ureta-Vidal A."/>
            <person name="Woodwark C."/>
            <person name="Zdobnov E."/>
            <person name="Bork P."/>
            <person name="Suyama M."/>
            <person name="Torrents D."/>
            <person name="Alexandersson M."/>
            <person name="Trask B.J."/>
            <person name="Young J.M."/>
            <person name="Huang H."/>
            <person name="Wang H."/>
            <person name="Xing H."/>
            <person name="Daniels S."/>
            <person name="Gietzen D."/>
            <person name="Schmidt J."/>
            <person name="Stevens K."/>
            <person name="Vitt U."/>
            <person name="Wingrove J."/>
            <person name="Camara F."/>
            <person name="Mar Alba M."/>
            <person name="Abril J.F."/>
            <person name="Guigo R."/>
            <person name="Smit A."/>
            <person name="Dubchak I."/>
            <person name="Rubin E.M."/>
            <person name="Couronne O."/>
            <person name="Poliakov A."/>
            <person name="Huebner N."/>
            <person name="Ganten D."/>
            <person name="Goesele C."/>
            <person name="Hummel O."/>
            <person name="Kreitler T."/>
            <person name="Lee Y.-A."/>
            <person name="Monti J."/>
            <person name="Schulz H."/>
            <person name="Zimdahl H."/>
            <person name="Himmelbauer H."/>
            <person name="Lehrach H."/>
            <person name="Jacob H.J."/>
            <person name="Bromberg S."/>
            <person name="Gullings-Handley J."/>
            <person name="Jensen-Seaman M.I."/>
            <person name="Kwitek A.E."/>
            <person name="Lazar J."/>
            <person name="Pasko D."/>
            <person name="Tonellato P.J."/>
            <person name="Twigger S."/>
            <person name="Ponting C.P."/>
            <person name="Duarte J.M."/>
            <person name="Rice S."/>
            <person name="Goodstadt L."/>
            <person name="Beatson S.A."/>
            <person name="Emes R.D."/>
            <person name="Winter E.E."/>
            <person name="Webber C."/>
            <person name="Brandt P."/>
            <person name="Nyakatura G."/>
            <person name="Adetobi M."/>
            <person name="Chiaromonte F."/>
            <person name="Elnitski L."/>
            <person name="Eswara P."/>
            <person name="Hardison R.C."/>
            <person name="Hou M."/>
            <person name="Kolbe D."/>
            <person name="Makova K."/>
            <person name="Miller W."/>
            <person name="Nekrutenko A."/>
            <person name="Riemer C."/>
            <person name="Schwartz S."/>
            <person name="Taylor J."/>
            <person name="Yang S."/>
            <person name="Zhang Y."/>
            <person name="Lindpaintner K."/>
            <person name="Andrews T.D."/>
            <person name="Caccamo M."/>
            <person name="Clamp M."/>
            <person name="Clarke L."/>
            <person name="Curwen V."/>
            <person name="Durbin R.M."/>
            <person name="Eyras E."/>
            <person name="Searle S.M."/>
            <person name="Cooper G.M."/>
            <person name="Batzoglou S."/>
            <person name="Brudno M."/>
            <person name="Sidow A."/>
            <person name="Stone E.A."/>
            <person name="Payseur B.A."/>
            <person name="Bourque G."/>
            <person name="Lopez-Otin C."/>
            <person name="Puente X.S."/>
            <person name="Chakrabarti K."/>
            <person name="Chatterji S."/>
            <person name="Dewey C."/>
            <person name="Pachter L."/>
            <person name="Bray N."/>
            <person name="Yap V.B."/>
            <person name="Caspi A."/>
            <person name="Tesler G."/>
            <person name="Pevzner P.A."/>
            <person name="Haussler D."/>
            <person name="Roskin K.M."/>
            <person name="Baertsch R."/>
            <person name="Clawson H."/>
            <person name="Furey T.S."/>
            <person name="Hinrichs A.S."/>
            <person name="Karolchik D."/>
            <person name="Kent W.J."/>
            <person name="Rosenbloom K.R."/>
            <person name="Trumbower H."/>
            <person name="Weirauch M."/>
            <person name="Cooper D.N."/>
            <person name="Stenson P.D."/>
            <person name="Ma B."/>
            <person name="Brent M."/>
            <person name="Arumugam M."/>
            <person name="Shteynberg D."/>
            <person name="Copley R.R."/>
            <person name="Taylor M.S."/>
            <person name="Riethman H."/>
            <person name="Mudunuri U."/>
            <person name="Peterson J."/>
            <person name="Guyer M."/>
            <person name="Felsenfeld A."/>
            <person name="Old S."/>
            <person name="Mockrin S."/>
            <person name="Collins F.S."/>
        </authorList>
    </citation>
    <scope>NUCLEOTIDE SEQUENCE [LARGE SCALE GENOMIC DNA]</scope>
    <source>
        <strain>Brown Norway</strain>
    </source>
</reference>
<reference key="5">
    <citation type="journal article" date="2003" name="J. Neurosci.">
        <title>Slick (Slo2.1), a rapidly-gating sodium-activated potassium channel inhibited by ATP.</title>
        <authorList>
            <person name="Bhattacharjee A."/>
            <person name="Joiner W.J."/>
            <person name="Wu M."/>
            <person name="Yang Y."/>
            <person name="Sigworth F.J."/>
            <person name="Kaczmarek L.K."/>
        </authorList>
    </citation>
    <scope>FUNCTION</scope>
    <scope>TRANSPORTER ACTIVITY</scope>
    <scope>ACTIVITY REGULATION</scope>
</reference>
<reference key="6">
    <citation type="journal article" date="2003" name="Neuron">
        <title>The sodium-activated potassium channel is encoded by a member of the Slo gene family.</title>
        <authorList>
            <person name="Yuan A."/>
            <person name="Santi C.M."/>
            <person name="Wei A."/>
            <person name="Wang Z.W."/>
            <person name="Pollak K."/>
            <person name="Nonet M."/>
            <person name="Kaczmarek L."/>
            <person name="Crowder C.M."/>
            <person name="Salkoff L."/>
        </authorList>
    </citation>
    <scope>FUNCTION</scope>
    <scope>TRANSPORTER ACTIVITY</scope>
    <scope>ACTIVITY REGULATION</scope>
</reference>
<reference key="7">
    <citation type="journal article" date="2005" name="J. Neurochem.">
        <title>Identification and functional characterization of cereblon as a binding protein for large-conductance calcium-activated potassium channel in rat brain.</title>
        <authorList>
            <person name="Jo S."/>
            <person name="Lee K.-H."/>
            <person name="Song S."/>
            <person name="Jung Y.-K."/>
            <person name="Park C.-S."/>
        </authorList>
    </citation>
    <scope>SUBCELLULAR LOCATION</scope>
    <scope>TOPOLOGY</scope>
    <scope>INTERACTION WITH CRBN</scope>
</reference>
<reference key="8">
    <citation type="journal article" date="2006" name="J. Neurosci.">
        <title>Opposite regulation of Slick and Slack K+ channels by neuromodulators.</title>
        <authorList>
            <person name="Santi C.M."/>
            <person name="Ferreira G."/>
            <person name="Yang B."/>
            <person name="Gazula V.R."/>
            <person name="Butler A."/>
            <person name="Wei A."/>
            <person name="Kaczmarek L.K."/>
            <person name="Salkoff L."/>
        </authorList>
    </citation>
    <scope>FUNCTION</scope>
    <scope>PHOSPHORYLATION</scope>
    <scope>TISSUE SPECIFICITY</scope>
    <scope>ACTIVITY REGULATION</scope>
</reference>
<reference key="9">
    <citation type="journal article" date="2008" name="J. Physiol. (Lond.)">
        <title>Amino-termini isoforms of the Slack K+ channel, regulated by alternative promoters, differentially modulate rhythmic firing and adaptation.</title>
        <authorList>
            <person name="Brown M.R."/>
            <person name="Kronengold J."/>
            <person name="Gazula V.R."/>
            <person name="Spilianakis C.G."/>
            <person name="Flavell R.A."/>
            <person name="von Hehn C.A."/>
            <person name="Bhattacharjee A."/>
            <person name="Kaczmarek L.K."/>
        </authorList>
    </citation>
    <scope>FUNCTION</scope>
</reference>
<reference key="10">
    <citation type="journal article" date="2009" name="J. Neurosci.">
        <title>The N-terminal domain of Slack determines the formation and trafficking of Slick/Slack heteromeric sodium-activated potassium channels.</title>
        <authorList>
            <person name="Chen H."/>
            <person name="Kronengold J."/>
            <person name="Yan Y."/>
            <person name="Gazula V.R."/>
            <person name="Brown M.R."/>
            <person name="Ma L."/>
            <person name="Ferreira G."/>
            <person name="Yang Y."/>
            <person name="Bhattacharjee A."/>
            <person name="Sigworth F.J."/>
            <person name="Salkoff L."/>
            <person name="Kaczmarek L.K."/>
        </authorList>
    </citation>
    <scope>SUBUNIT</scope>
    <scope>INTERACTION WITH KCNT2</scope>
</reference>
<reference key="11">
    <citation type="journal article" date="2009" name="Nat. Neurosci.">
        <title>Na+-activated K+ channels express a large delayed outward current in neurons during normal physiology.</title>
        <authorList>
            <person name="Budelli G."/>
            <person name="Hage T.A."/>
            <person name="Wei A."/>
            <person name="Rojas P."/>
            <person name="Jong Y.J."/>
            <person name="O'Malley K."/>
            <person name="Salkoff L."/>
        </authorList>
    </citation>
    <scope>FUNCTION</scope>
</reference>
<reference key="12">
    <citation type="journal article" date="2010" name="Nat. Neurosci.">
        <title>Fragile X mental retardation protein controls gating of the sodium-activated potassium channel Slack.</title>
        <authorList>
            <person name="Brown M.R."/>
            <person name="Kronengold J."/>
            <person name="Gazula V.R."/>
            <person name="Chen Y."/>
            <person name="Strumbos J.G."/>
            <person name="Sigworth F.J."/>
            <person name="Navaratnam D."/>
            <person name="Kaczmarek L.K."/>
        </authorList>
    </citation>
    <scope>INTERACTION WITH FMR1</scope>
</reference>
<reference key="13">
    <citation type="journal article" date="2012" name="Nat. Genet.">
        <title>De novo gain-of-function KCNT1 channel mutations cause malignant migrating partial seizures of infancy.</title>
        <authorList>
            <person name="Barcia G."/>
            <person name="Fleming M.R."/>
            <person name="Deligniere A."/>
            <person name="Gazula V.R."/>
            <person name="Brown M.R."/>
            <person name="Langouet M."/>
            <person name="Chen H."/>
            <person name="Kronengold J."/>
            <person name="Abhyankar A."/>
            <person name="Cilio R."/>
            <person name="Nitschke P."/>
            <person name="Kaminska A."/>
            <person name="Boddaert N."/>
            <person name="Casanova J.L."/>
            <person name="Desguerre I."/>
            <person name="Munnich A."/>
            <person name="Dulac O."/>
            <person name="Kaczmarek L.K."/>
            <person name="Colleaux L."/>
            <person name="Nabbout R."/>
        </authorList>
    </citation>
    <scope>MUTAGENESIS OF ARG-409 AND ALA-915</scope>
</reference>
<reference key="14">
    <citation type="journal article" date="2014" name="Hum. Mol. Genet.">
        <title>Clinical whole-genome sequencing in severe early-onset epilepsy reveals new genes and improves molecular diagnosis.</title>
        <authorList>
            <consortium name="WGS500 Consortium"/>
            <person name="Martin H.C."/>
            <person name="Kim G.E."/>
            <person name="Pagnamenta A.T."/>
            <person name="Murakami Y."/>
            <person name="Carvill G.L."/>
            <person name="Meyer E."/>
            <person name="Copley R.R."/>
            <person name="Rimmer A."/>
            <person name="Barcia G."/>
            <person name="Fleming M.R."/>
            <person name="Kronengold J."/>
            <person name="Brown M.R."/>
            <person name="Hudspith K.A."/>
            <person name="Broxholme J."/>
            <person name="Kanapin A."/>
            <person name="Cazier J.B."/>
            <person name="Kinoshita T."/>
            <person name="Nabbout R."/>
            <person name="Bentley D."/>
            <person name="McVean G."/>
            <person name="Heavin S."/>
            <person name="Zaiwalla Z."/>
            <person name="McShane T."/>
            <person name="Mefford H.C."/>
            <person name="Shears D."/>
            <person name="Stewart H."/>
            <person name="Kurian M.A."/>
            <person name="Scheffer I.E."/>
            <person name="Blair E."/>
            <person name="Donnelly P."/>
            <person name="Kaczmarek L.K."/>
            <person name="Taylor J.C."/>
        </authorList>
    </citation>
    <scope>FUNCTION</scope>
    <scope>MUTAGENESIS OF ALA-947</scope>
</reference>
<reference key="15">
    <citation type="journal article" date="2023" name="J. Neurosci.">
        <title>Identification of Sodium- and Chloride-Sensitive Sites in the Slack Channel.</title>
        <authorList>
            <person name="Xu J."/>
            <person name="Lv Y.T."/>
            <person name="Zhao X.Y."/>
            <person name="Wang J.J."/>
            <person name="Shen Z.S."/>
            <person name="Li J."/>
            <person name="Zhang F.F."/>
            <person name="Liu J."/>
            <person name="Wang X.H."/>
            <person name="Xu Y."/>
            <person name="Geng Q."/>
            <person name="Ding Y.T."/>
            <person name="Xu J.J."/>
            <person name="Tan M.J."/>
            <person name="Li Z.X."/>
            <person name="Wang R."/>
            <person name="Chen J."/>
            <person name="Sun W."/>
            <person name="Cui M."/>
            <person name="Logothetis D.E."/>
            <person name="Cao J.L."/>
            <person name="Tang Q.Y."/>
            <person name="Zhang Z."/>
        </authorList>
    </citation>
    <scope>FUNCTION</scope>
    <scope>ACTIVITY REGULATION</scope>
    <scope>SUBCELLULAR LOCATION</scope>
    <scope>MUTAGENESIS OF MET-335; GLU-373 AND ARG-379</scope>
</reference>
<sequence length="1239" mass="139788">MARAKLPRSPSEGKAGPGDTPAGSAAPEEPHGLSPLLPTRGGGSVGSDVGQRLHVEDFSLDSSLSQVQVEFYVNENTFKERLKLFFIKNQRSSLRIRLFNFSLKLLTCLLYIVRVLLDNPDQGIGCWGCTKYNYTFNGSSSEFHWAPILWVERKMALWVIQVIVATISFLETMLLIYLSYKGNIWEQIFHVSFVLEMINTLPFIITVFWPPLRNLFIPVFLNCWLAKHALENMINDFHRAILRTQSAMFNQVLILFCTLLCLVFTGTCGIQHLERAGGNLNLLTSFYFCIVTFSTVGFGDVTPKIWPSQLLVVILICVTLVVLPLQFEELVYLWMERQKSGGNYSRHRARTEKHVVLCVSSLKIDLLMDFLNEFYAHPRLQDYYVVILCPSEMDVQVRRVLQIPLWSQRVIYLQGSALKDQDLMRAKMDNGEACFILSSRNEVDRTAADHQTILRAWAVKDFAPNCPLYVQILKPENKFHVKFADHVVCEEECKYAMLALNCICPATSTLITLLVHTSRGQEGQESPEQWQRMYGRCSGNEVYHIRMGDSKFFREYEGKSFTYAAFHAHKKYGVCLIGLKREENKSILLNPGPRHILAASDTCFYINITKEENSAFIFKQEEKQKRRGLAGQALYEGPSRLPVHSIIASMGTVAMDLQNTDCRPSQGGSGGGGGKLTLPTENGSGSRRPSIAPVLELADSSALLPCDLLSDQSEDEVTPSDDEGLSVVEYVKGYPPNSPYIGSSPTLCHLLPVKAPFCCLRLDKGCKHNSYEDAKAYGFKNKLIIVSAETAGNGLYNFIVPLRAYYRSRRELNPIVLLLDNKPDHHFLEAICCFPMVYYMEGSVDNLDSLLQCGIIYADNLVVVDKESTMSAEEDYMADAKTIVNVQTMFRLFPSLSITTELTHPSNMRFMQFRAKDSYSLALSKLEKQERENGSNLAFMFRLPFAAGRVFSISMLDTLLYQSFVKDYMITITRLLLGLDTTPGSGYLCAMKVTEDDLWIRTYGRLFQKLCSSSAEIPIGIYRTECHVFSSEPHDLRAQSQISVNMEDCEDTREAKGPWGTRAASGGGSTHGRHGGSADPVEHPLLRRKSLQWARKLSRKSSKQAGKAPMTTDWITQQRLSLYRRSERQELSELVKNRMKHLGLPTTGYEDVANLTASDVMNRVNLGYLQDEMNDHHQNTLSYVLINPPPDTRLEPNDIVYLIRSDPLAHVTSSSQSRKSSCSNKLSSCNPETRDETQL</sequence>
<proteinExistence type="evidence at protein level"/>
<protein>
    <recommendedName>
        <fullName>Potassium channel subfamily T member 1</fullName>
    </recommendedName>
    <alternativeName>
        <fullName>Sequence like a calcium-activated potassium channel subunit</fullName>
    </alternativeName>
</protein>
<organism>
    <name type="scientific">Rattus norvegicus</name>
    <name type="common">Rat</name>
    <dbReference type="NCBI Taxonomy" id="10116"/>
    <lineage>
        <taxon>Eukaryota</taxon>
        <taxon>Metazoa</taxon>
        <taxon>Chordata</taxon>
        <taxon>Craniata</taxon>
        <taxon>Vertebrata</taxon>
        <taxon>Euteleostomi</taxon>
        <taxon>Mammalia</taxon>
        <taxon>Eutheria</taxon>
        <taxon>Euarchontoglires</taxon>
        <taxon>Glires</taxon>
        <taxon>Rodentia</taxon>
        <taxon>Myomorpha</taxon>
        <taxon>Muroidea</taxon>
        <taxon>Muridae</taxon>
        <taxon>Murinae</taxon>
        <taxon>Rattus</taxon>
    </lineage>
</organism>
<dbReference type="EMBL" id="AF089730">
    <property type="protein sequence ID" value="AAC83350.1"/>
    <property type="molecule type" value="mRNA"/>
</dbReference>
<dbReference type="EMBL" id="AY884213">
    <property type="protein sequence ID" value="AAX16016.1"/>
    <property type="molecule type" value="mRNA"/>
</dbReference>
<dbReference type="EMBL" id="AABR07051248">
    <property type="status" value="NOT_ANNOTATED_CDS"/>
    <property type="molecule type" value="Genomic_DNA"/>
</dbReference>
<dbReference type="PIR" id="T46609">
    <property type="entry name" value="T46609"/>
</dbReference>
<dbReference type="RefSeq" id="NP_068625.1">
    <property type="nucleotide sequence ID" value="NM_021853.1"/>
</dbReference>
<dbReference type="RefSeq" id="XP_006233761.1">
    <molecule id="Q9Z258-1"/>
    <property type="nucleotide sequence ID" value="XM_006233699.5"/>
</dbReference>
<dbReference type="FunCoup" id="Q9Z258">
    <property type="interactions" value="1442"/>
</dbReference>
<dbReference type="STRING" id="10116.ENSRNOP00000023542"/>
<dbReference type="BindingDB" id="Q9Z258"/>
<dbReference type="ChEMBL" id="CHEMBL4739708"/>
<dbReference type="DrugCentral" id="Q9Z258"/>
<dbReference type="GuidetoPHARMACOLOGY" id="385"/>
<dbReference type="TCDB" id="1.A.1.3.4">
    <property type="family name" value="the voltage-gated ion channel (vic) superfamily"/>
</dbReference>
<dbReference type="GlyCosmos" id="Q9Z258">
    <property type="glycosylation" value="2 sites, No reported glycans"/>
</dbReference>
<dbReference type="GlyGen" id="Q9Z258">
    <property type="glycosylation" value="3 sites"/>
</dbReference>
<dbReference type="iPTMnet" id="Q9Z258"/>
<dbReference type="PhosphoSitePlus" id="Q9Z258"/>
<dbReference type="PaxDb" id="10116-ENSRNOP00000023542"/>
<dbReference type="ABCD" id="Q9Z258">
    <property type="antibodies" value="1 sequenced antibody"/>
</dbReference>
<dbReference type="Ensembl" id="ENSRNOT00000023542.6">
    <molecule id="Q9Z258-1"/>
    <property type="protein sequence ID" value="ENSRNOP00000023542.6"/>
    <property type="gene ID" value="ENSRNOG00000017283.9"/>
</dbReference>
<dbReference type="Ensembl" id="ENSRNOT00055000913">
    <molecule id="Q9Z258-1"/>
    <property type="protein sequence ID" value="ENSRNOP00055000726"/>
    <property type="gene ID" value="ENSRNOG00055000527"/>
</dbReference>
<dbReference type="Ensembl" id="ENSRNOT00060055395">
    <molecule id="Q9Z258-1"/>
    <property type="protein sequence ID" value="ENSRNOP00060045839"/>
    <property type="gene ID" value="ENSRNOG00060031801"/>
</dbReference>
<dbReference type="Ensembl" id="ENSRNOT00065046477">
    <molecule id="Q9Z258-1"/>
    <property type="protein sequence ID" value="ENSRNOP00065038105"/>
    <property type="gene ID" value="ENSRNOG00065026234"/>
</dbReference>
<dbReference type="GeneID" id="60444"/>
<dbReference type="KEGG" id="rno:60444"/>
<dbReference type="UCSC" id="RGD:621106">
    <molecule id="Q9Z258-1"/>
    <property type="organism name" value="rat"/>
</dbReference>
<dbReference type="AGR" id="RGD:621106"/>
<dbReference type="CTD" id="57582"/>
<dbReference type="RGD" id="621106">
    <property type="gene designation" value="Kcnt1"/>
</dbReference>
<dbReference type="VEuPathDB" id="HostDB:ENSRNOG00000017283"/>
<dbReference type="eggNOG" id="KOG3193">
    <property type="taxonomic scope" value="Eukaryota"/>
</dbReference>
<dbReference type="GeneTree" id="ENSGT00940000156880"/>
<dbReference type="InParanoid" id="Q9Z258"/>
<dbReference type="OMA" id="GMCSIEH"/>
<dbReference type="OrthoDB" id="257992at2759"/>
<dbReference type="PhylomeDB" id="Q9Z258"/>
<dbReference type="TreeFam" id="TF314283"/>
<dbReference type="PRO" id="PR:Q9Z258"/>
<dbReference type="Proteomes" id="UP000002494">
    <property type="component" value="Chromosome 3"/>
</dbReference>
<dbReference type="Bgee" id="ENSRNOG00000017283">
    <property type="expression patterns" value="Expressed in cerebellum and 15 other cell types or tissues"/>
</dbReference>
<dbReference type="GO" id="GO:0005886">
    <property type="term" value="C:plasma membrane"/>
    <property type="evidence" value="ECO:0000314"/>
    <property type="project" value="UniProtKB"/>
</dbReference>
<dbReference type="GO" id="GO:0098839">
    <property type="term" value="C:postsynaptic density membrane"/>
    <property type="evidence" value="ECO:0000266"/>
    <property type="project" value="RGD"/>
</dbReference>
<dbReference type="GO" id="GO:0070089">
    <property type="term" value="F:chloride-activated potassium channel activity"/>
    <property type="evidence" value="ECO:0000314"/>
    <property type="project" value="UniProtKB"/>
</dbReference>
<dbReference type="GO" id="GO:0005228">
    <property type="term" value="F:intracellular sodium-activated potassium channel activity"/>
    <property type="evidence" value="ECO:0000314"/>
    <property type="project" value="UniProtKB"/>
</dbReference>
<dbReference type="GO" id="GO:0046872">
    <property type="term" value="F:metal ion binding"/>
    <property type="evidence" value="ECO:0007669"/>
    <property type="project" value="UniProtKB-KW"/>
</dbReference>
<dbReference type="GO" id="GO:0015271">
    <property type="term" value="F:outward rectifier potassium channel activity"/>
    <property type="evidence" value="ECO:0000314"/>
    <property type="project" value="UniProtKB"/>
</dbReference>
<dbReference type="GO" id="GO:0005267">
    <property type="term" value="F:potassium channel activity"/>
    <property type="evidence" value="ECO:0000314"/>
    <property type="project" value="RGD"/>
</dbReference>
<dbReference type="GO" id="GO:0071805">
    <property type="term" value="P:potassium ion transmembrane transport"/>
    <property type="evidence" value="ECO:0000314"/>
    <property type="project" value="UniProtKB"/>
</dbReference>
<dbReference type="GO" id="GO:0006813">
    <property type="term" value="P:potassium ion transport"/>
    <property type="evidence" value="ECO:0000314"/>
    <property type="project" value="RGD"/>
</dbReference>
<dbReference type="GO" id="GO:0051289">
    <property type="term" value="P:protein homotetramerization"/>
    <property type="evidence" value="ECO:0000250"/>
    <property type="project" value="UniProtKB"/>
</dbReference>
<dbReference type="GO" id="GO:0060078">
    <property type="term" value="P:regulation of postsynaptic membrane potential"/>
    <property type="evidence" value="ECO:0000266"/>
    <property type="project" value="RGD"/>
</dbReference>
<dbReference type="FunFam" id="3.40.50.720:FF:000011">
    <property type="entry name" value="Potassium channel subfamily T member 1"/>
    <property type="match status" value="1"/>
</dbReference>
<dbReference type="FunFam" id="3.40.50.720:FF:000034">
    <property type="entry name" value="Potassium channel subfamily T member 1"/>
    <property type="match status" value="1"/>
</dbReference>
<dbReference type="FunFam" id="1.10.287.70:FF:000069">
    <property type="entry name" value="Potassium sodium-activated channel subfamily T member 1"/>
    <property type="match status" value="1"/>
</dbReference>
<dbReference type="Gene3D" id="1.10.287.70">
    <property type="match status" value="1"/>
</dbReference>
<dbReference type="Gene3D" id="3.40.50.720">
    <property type="entry name" value="NAD(P)-binding Rossmann-like Domain"/>
    <property type="match status" value="2"/>
</dbReference>
<dbReference type="InterPro" id="IPR003929">
    <property type="entry name" value="K_chnl_BK_asu"/>
</dbReference>
<dbReference type="InterPro" id="IPR013099">
    <property type="entry name" value="K_chnl_dom"/>
</dbReference>
<dbReference type="InterPro" id="IPR047871">
    <property type="entry name" value="K_chnl_Slo-like"/>
</dbReference>
<dbReference type="InterPro" id="IPR003148">
    <property type="entry name" value="RCK_N"/>
</dbReference>
<dbReference type="PANTHER" id="PTHR10027">
    <property type="entry name" value="CALCIUM-ACTIVATED POTASSIUM CHANNEL ALPHA CHAIN"/>
    <property type="match status" value="1"/>
</dbReference>
<dbReference type="PANTHER" id="PTHR10027:SF14">
    <property type="entry name" value="POTASSIUM CHANNEL SUBFAMILY T MEMBER 1"/>
    <property type="match status" value="1"/>
</dbReference>
<dbReference type="Pfam" id="PF03493">
    <property type="entry name" value="BK_channel_a"/>
    <property type="match status" value="1"/>
</dbReference>
<dbReference type="Pfam" id="PF07885">
    <property type="entry name" value="Ion_trans_2"/>
    <property type="match status" value="1"/>
</dbReference>
<dbReference type="Pfam" id="PF22614">
    <property type="entry name" value="Slo-like_RCK"/>
    <property type="match status" value="2"/>
</dbReference>
<dbReference type="SUPFAM" id="SSF81324">
    <property type="entry name" value="Voltage-gated potassium channels"/>
    <property type="match status" value="1"/>
</dbReference>
<dbReference type="PROSITE" id="PS51201">
    <property type="entry name" value="RCK_N"/>
    <property type="match status" value="2"/>
</dbReference>
<feature type="chain" id="PRO_0000054092" description="Potassium channel subfamily T member 1">
    <location>
        <begin position="1"/>
        <end position="1239"/>
    </location>
</feature>
<feature type="topological domain" description="Cytoplasmic" evidence="21">
    <location>
        <begin position="1"/>
        <end position="93"/>
    </location>
</feature>
<feature type="transmembrane region" description="Helical; Name=Segment S1" evidence="1">
    <location>
        <begin position="94"/>
        <end position="126"/>
    </location>
</feature>
<feature type="topological domain" description="Extracellular" evidence="21">
    <location>
        <begin position="127"/>
        <end position="153"/>
    </location>
</feature>
<feature type="transmembrane region" description="Helical; Name=Segment S2" evidence="1">
    <location>
        <begin position="154"/>
        <end position="178"/>
    </location>
</feature>
<feature type="topological domain" description="Cytoplasmic" evidence="21">
    <location>
        <begin position="179"/>
        <end position="192"/>
    </location>
</feature>
<feature type="transmembrane region" description="Helical; Name=Segment S3" evidence="1">
    <location>
        <begin position="193"/>
        <end position="208"/>
    </location>
</feature>
<feature type="topological domain" description="Extracellular" evidence="21">
    <location>
        <begin position="209"/>
        <end position="215"/>
    </location>
</feature>
<feature type="transmembrane region" description="Helical; Name=Segment S4" evidence="1">
    <location>
        <begin position="216"/>
        <end position="233"/>
    </location>
</feature>
<feature type="topological domain" description="Cytoplasmic" evidence="21">
    <location>
        <begin position="234"/>
        <end position="246"/>
    </location>
</feature>
<feature type="transmembrane region" description="Helical; Name=Segment S5" evidence="1">
    <location>
        <begin position="247"/>
        <end position="274"/>
    </location>
</feature>
<feature type="topological domain" description="Extracellular" evidence="21">
    <location>
        <begin position="275"/>
        <end position="281"/>
    </location>
</feature>
<feature type="intramembrane region" description="Pore-forming" evidence="1">
    <location>
        <begin position="282"/>
        <end position="302"/>
    </location>
</feature>
<feature type="topological domain" description="Extracellular" evidence="21">
    <location>
        <begin position="303"/>
        <end position="304"/>
    </location>
</feature>
<feature type="transmembrane region" description="Helical; Name=Segment S6" evidence="1">
    <location>
        <begin position="305"/>
        <end position="338"/>
    </location>
</feature>
<feature type="topological domain" description="Cytoplasmic" evidence="21">
    <location>
        <begin position="339"/>
        <end position="1239"/>
    </location>
</feature>
<feature type="domain" description="RCK N-terminal 1" evidence="4">
    <location>
        <begin position="352"/>
        <end position="488"/>
    </location>
</feature>
<feature type="domain" description="RCK N-terminal 2" evidence="4">
    <location>
        <begin position="781"/>
        <end position="921"/>
    </location>
</feature>
<feature type="region of interest" description="Disordered" evidence="5">
    <location>
        <begin position="1"/>
        <end position="45"/>
    </location>
</feature>
<feature type="region of interest" description="Disordered" evidence="5">
    <location>
        <begin position="658"/>
        <end position="689"/>
    </location>
</feature>
<feature type="region of interest" description="Disordered" evidence="5">
    <location>
        <begin position="1053"/>
        <end position="1081"/>
    </location>
</feature>
<feature type="region of interest" description="Disordered" evidence="5">
    <location>
        <begin position="1212"/>
        <end position="1239"/>
    </location>
</feature>
<feature type="compositionally biased region" description="Low complexity" evidence="5">
    <location>
        <begin position="1213"/>
        <end position="1230"/>
    </location>
</feature>
<feature type="binding site" evidence="1">
    <location>
        <position position="296"/>
    </location>
    <ligand>
        <name>K(+)</name>
        <dbReference type="ChEBI" id="CHEBI:29103"/>
        <label>1</label>
        <note>ligand shared between homotetrameric partners</note>
    </ligand>
</feature>
<feature type="binding site" evidence="1">
    <location>
        <position position="297"/>
    </location>
    <ligand>
        <name>K(+)</name>
        <dbReference type="ChEBI" id="CHEBI:29103"/>
        <label>1</label>
        <note>ligand shared between homotetrameric partners</note>
    </ligand>
</feature>
<feature type="binding site" evidence="1">
    <location>
        <position position="513"/>
    </location>
    <ligand>
        <name>Na(+)</name>
        <dbReference type="ChEBI" id="CHEBI:29101"/>
        <label>1</label>
    </ligand>
</feature>
<feature type="binding site" evidence="1">
    <location>
        <position position="516"/>
    </location>
    <ligand>
        <name>Na(+)</name>
        <dbReference type="ChEBI" id="CHEBI:29101"/>
        <label>1</label>
    </ligand>
</feature>
<feature type="binding site" evidence="1">
    <location>
        <position position="538"/>
    </location>
    <ligand>
        <name>Na(+)</name>
        <dbReference type="ChEBI" id="CHEBI:29101"/>
        <label>1</label>
    </ligand>
</feature>
<feature type="binding site" evidence="1">
    <location>
        <position position="540"/>
    </location>
    <ligand>
        <name>Na(+)</name>
        <dbReference type="ChEBI" id="CHEBI:29101"/>
        <label>1</label>
    </ligand>
</feature>
<feature type="binding site" evidence="1">
    <location>
        <position position="758"/>
    </location>
    <ligand>
        <name>Zn(2+)</name>
        <dbReference type="ChEBI" id="CHEBI:29105"/>
    </ligand>
</feature>
<feature type="binding site" evidence="1">
    <location>
        <position position="759"/>
    </location>
    <ligand>
        <name>Zn(2+)</name>
        <dbReference type="ChEBI" id="CHEBI:29105"/>
    </ligand>
</feature>
<feature type="binding site" evidence="1">
    <location>
        <position position="761"/>
    </location>
    <ligand>
        <name>K(+)</name>
        <dbReference type="ChEBI" id="CHEBI:29103"/>
        <label>3</label>
    </ligand>
</feature>
<feature type="binding site" evidence="1">
    <location>
        <position position="761"/>
    </location>
    <ligand>
        <name>Na(+)</name>
        <dbReference type="ChEBI" id="CHEBI:29101"/>
        <label>2</label>
    </ligand>
</feature>
<feature type="binding site" evidence="1">
    <location>
        <position position="764"/>
    </location>
    <ligand>
        <name>K(+)</name>
        <dbReference type="ChEBI" id="CHEBI:29103"/>
        <label>3</label>
    </ligand>
</feature>
<feature type="binding site" evidence="1">
    <location>
        <position position="764"/>
    </location>
    <ligand>
        <name>Na(+)</name>
        <dbReference type="ChEBI" id="CHEBI:29101"/>
        <label>2</label>
    </ligand>
</feature>
<feature type="binding site" evidence="1">
    <location>
        <position position="766"/>
    </location>
    <ligand>
        <name>Zn(2+)</name>
        <dbReference type="ChEBI" id="CHEBI:29105"/>
    </ligand>
</feature>
<feature type="binding site" evidence="1">
    <location>
        <position position="768"/>
    </location>
    <ligand>
        <name>Zn(2+)</name>
        <dbReference type="ChEBI" id="CHEBI:29105"/>
    </ligand>
</feature>
<feature type="binding site" evidence="1">
    <location>
        <position position="769"/>
    </location>
    <ligand>
        <name>K(+)</name>
        <dbReference type="ChEBI" id="CHEBI:29103"/>
        <label>3</label>
    </ligand>
</feature>
<feature type="binding site" evidence="1">
    <location>
        <position position="771"/>
    </location>
    <ligand>
        <name>K(+)</name>
        <dbReference type="ChEBI" id="CHEBI:29103"/>
        <label>3</label>
    </ligand>
</feature>
<feature type="binding site" evidence="1">
    <location>
        <position position="771"/>
    </location>
    <ligand>
        <name>Na(+)</name>
        <dbReference type="ChEBI" id="CHEBI:29101"/>
        <label>2</label>
    </ligand>
</feature>
<feature type="binding site" evidence="1">
    <location>
        <position position="777"/>
    </location>
    <ligand>
        <name>K(+)</name>
        <dbReference type="ChEBI" id="CHEBI:29103"/>
        <label>3</label>
    </ligand>
</feature>
<feature type="binding site" evidence="1">
    <location>
        <position position="778"/>
    </location>
    <ligand>
        <name>K(+)</name>
        <dbReference type="ChEBI" id="CHEBI:29103"/>
        <label>2</label>
    </ligand>
</feature>
<feature type="binding site" evidence="1">
    <location>
        <position position="779"/>
    </location>
    <ligand>
        <name>Na(+)</name>
        <dbReference type="ChEBI" id="CHEBI:29101"/>
        <label>2</label>
    </ligand>
</feature>
<feature type="binding site" evidence="1">
    <location>
        <position position="787"/>
    </location>
    <ligand>
        <name>K(+)</name>
        <dbReference type="ChEBI" id="CHEBI:29103"/>
        <label>2</label>
    </ligand>
</feature>
<feature type="binding site" evidence="1">
    <location>
        <position position="818"/>
    </location>
    <ligand>
        <name>K(+)</name>
        <dbReference type="ChEBI" id="CHEBI:29103"/>
        <label>2</label>
    </ligand>
</feature>
<feature type="binding site" evidence="1">
    <location>
        <position position="820"/>
    </location>
    <ligand>
        <name>K(+)</name>
        <dbReference type="ChEBI" id="CHEBI:29103"/>
        <label>2</label>
    </ligand>
</feature>
<feature type="binding site" evidence="1">
    <location>
        <position position="842"/>
    </location>
    <ligand>
        <name>K(+)</name>
        <dbReference type="ChEBI" id="CHEBI:29103"/>
        <label>2</label>
    </ligand>
</feature>
<feature type="binding site" evidence="1">
    <location>
        <position position="865"/>
    </location>
    <ligand>
        <name>K(+)</name>
        <dbReference type="ChEBI" id="CHEBI:29103"/>
        <label>2</label>
    </ligand>
</feature>
<feature type="glycosylation site" description="N-linked (GlcNAc...) asparagine" evidence="3">
    <location>
        <position position="133"/>
    </location>
</feature>
<feature type="glycosylation site" description="N-linked (GlcNAc...) asparagine" evidence="3">
    <location>
        <position position="137"/>
    </location>
</feature>
<feature type="splice variant" id="VSP_015472" description="In isoform 2." evidence="20">
    <original>MARAKLPRSPSEGKAGPGDTPAGSAAPEEPHGLSPLLPTRGGGSVGSDVGQRLHVEDFSLDSSLSQ</original>
    <variation>MNDLDTEVLPLPPRYRFRDLLLGDQTFPNDDR</variation>
    <location>
        <begin position="1"/>
        <end position="66"/>
    </location>
</feature>
<feature type="mutagenesis site" description="Shows channel activity even in the absence of cytosolic Na(+)." evidence="17">
    <original>M</original>
    <variation>A</variation>
    <location>
        <position position="335"/>
    </location>
</feature>
<feature type="mutagenesis site" description="Does not elicit any current. Completely abolishes Na(+) sensitivity. Does not affect membrane localization." evidence="17">
    <original>E</original>
    <variation>Q</variation>
    <location>
        <position position="373"/>
    </location>
</feature>
<feature type="mutagenesis site" description="Completely abolishes Cl(-) sensitivity." evidence="17">
    <original>R</original>
    <variation>Q</variation>
    <location>
        <position position="379"/>
    </location>
</feature>
<feature type="mutagenesis site" description="Generates currents that resembles wild-type in terms of voltage dependence and kinetic behavior but has 2- to 3-fold higher amplitude compared to wild-type. The mutation shows to cause constitutive activation of the channel, mimicking the effects of phosphorylation of the C-terminal domain by PRKCA activation." evidence="15">
    <original>R</original>
    <variation>Q</variation>
    <location>
        <position position="409"/>
    </location>
</feature>
<feature type="mutagenesis site" description="Generates currents that resembles wild-type in terms of voltage dependence and kinetic behavior but has 2- to 3-fold higher amplitude compared to wild-type. The mutation shows to cause constitutive activation of the channel, mimicking the effects of phosphorylation of the C-terminal domain by PRKCA activation." evidence="15">
    <original>A</original>
    <variation>T</variation>
    <location>
        <position position="915"/>
    </location>
</feature>
<feature type="mutagenesis site" description="Increases channel activity upon positive potentials. The mutation corresponds to probable disease-associated variant in humans." evidence="16">
    <original>A</original>
    <variation>T</variation>
    <location>
        <position position="947"/>
    </location>
</feature>
<feature type="sequence conflict" description="In Ref. 1; AAC83350 and 2; AAX16016." evidence="21" ref="1 2">
    <original>K</original>
    <variation>N</variation>
    <location>
        <position position="625"/>
    </location>
</feature>
<feature type="sequence conflict" description="In Ref. 1; AAC83350 and 2; AAX16016." evidence="21" ref="1 2">
    <location>
        <begin position="653"/>
        <end position="654"/>
    </location>
</feature>
<name>KCNT1_RAT</name>
<accession>Q9Z258</accession>
<accession>F1LSG1</accession>
<accession>Q5D6C6</accession>
<gene>
    <name type="primary">Kcnt1</name>
    <name evidence="18" type="synonym">Slack</name>
</gene>
<keyword id="KW-0025">Alternative splicing</keyword>
<keyword id="KW-1003">Cell membrane</keyword>
<keyword id="KW-0325">Glycoprotein</keyword>
<keyword id="KW-0407">Ion channel</keyword>
<keyword id="KW-0406">Ion transport</keyword>
<keyword id="KW-0472">Membrane</keyword>
<keyword id="KW-0479">Metal-binding</keyword>
<keyword id="KW-0597">Phosphoprotein</keyword>
<keyword id="KW-0630">Potassium</keyword>
<keyword id="KW-0631">Potassium channel</keyword>
<keyword id="KW-0633">Potassium transport</keyword>
<keyword id="KW-1185">Reference proteome</keyword>
<keyword id="KW-0915">Sodium</keyword>
<keyword id="KW-0812">Transmembrane</keyword>
<keyword id="KW-1133">Transmembrane helix</keyword>
<keyword id="KW-0813">Transport</keyword>
<keyword id="KW-0862">Zinc</keyword>